<name>NSRO_ASPN1</name>
<comment type="function">
    <text evidence="3 4 5">Short chain dehydrogenase/reductase; part of the gene cluster that mediates the biosynthesis of the tetrahydroxanthone dimer neosartorin, which exhibits antibacterial activity (PubMed:30394754, PubMed:32105084, PubMed:33891392). The two different monomeric units appear to be synthesized by the same set of enzymes, among which the Baeyer-Villiger monooxygenase nsrF is the key enzyme for the divergence of the biosynthetic routes (PubMed:32105084). The pathway begins with the synthesis of atrochrysone thioester by the polyketide synthase nsrB (PubMed:32105084). The atrochrysone carboxyl ACP thioesterase nsrC then breaks the thioester bond and releases the atrochrysone carboxylic acid from AacuL (PubMed:32105084). Atrochrysone carboxylic acid is decarboxylated by the decarboxylase nsrE, and oxidized by the anthrone oxygenase nsrD to yield emodin (PubMed:32105084). Emodin is then reduced to emodin hydroquinone by the oxidoreductase nsrR (PubMed:32105084). A-ring reduction by the short chain dehydrogenase nsrJ, dehydration by the scytalone dehydratase-like protein nsrI and probable spontaneous re-oxidation, results in overall deoxygenation to chrysophanol (PubMed:32105084). The Baeyer-Villiger monooxygenase nsrF accepts chrysophanol as a substrate to insert one oxygen atom at two different positions to yield the precursors of both monomric units (PubMed:30394754, PubMed:32105084, PubMed:33891392). NsrF is promiscuous/flexible in interacting with the 2 (non methylated and methylated) aromatic rings of chrysophanol, thus diverging the biosynthetic pathway at this point (PubMed:30394754, PubMed:32105084, PubMed:33891392). After the hydrolysis of the lactones, methylesterification by the methyltransferase nsrG yields respectively moniliphenone and 2,2',6'-trihydroxy-4-methyl-6-methoxya-cyldiphenylmethanone (PubMed:30394754, PubMed:32105084). The next steps are the hydroxylation by the FAD-dependent monooxygenase nsrK, followed by isomerization by the monooxygenase nsrQ (PubMed:32105084). The short chain dehydrogenase/reductase nsrO then catalyzes the C-5 ketoreduction to give the xanthone skeleton of blennolide C and 5-acetylblennolide A (PubMed:32105084). The acetyltransferase nsrL has a strict substrate specificity and uses only blennolide A but not blennolide C to yield 5-acetylblennolide A as the single-acetylated product (PubMed:30394754). In the final step of the biosynthesis, the heterodimerization of the 2 xanthones, blennolide C and 5-acetylblennolide A, is catalyzed by the cytochrome P450 monooxygenase nsrP (PubMed:30394754). NsrP can utilize at least three different xanthones as its substrates to perform the dimerization reaction (PubMed:30394754).</text>
</comment>
<comment type="pathway">
    <text evidence="3">Secondary metabolite biosynthesis.</text>
</comment>
<comment type="disruption phenotype">
    <text evidence="3">Impairs the production of neosartorin but accumulates no metabolites related to the neosartorin pathway.</text>
</comment>
<comment type="similarity">
    <text evidence="7">Belongs to the short-chain dehydrogenases/reductases (SDR) family.</text>
</comment>
<feature type="chain" id="PRO_0000453453" description="Short chain dehydrogenase/reductase nsrO">
    <location>
        <begin position="1"/>
        <end position="290"/>
    </location>
</feature>
<feature type="active site" description="Proton donor" evidence="2">
    <location>
        <position position="168"/>
    </location>
</feature>
<feature type="active site" description="Proton donor" evidence="2">
    <location>
        <position position="182"/>
    </location>
</feature>
<feature type="active site" description="Lowers pKa of active site Tyr" evidence="2">
    <location>
        <position position="186"/>
    </location>
</feature>
<feature type="binding site" evidence="1">
    <location>
        <position position="37"/>
    </location>
    <ligand>
        <name>NADP(+)</name>
        <dbReference type="ChEBI" id="CHEBI:58349"/>
    </ligand>
</feature>
<feature type="binding site" evidence="1">
    <location>
        <position position="149"/>
    </location>
    <ligand>
        <name>NADP(+)</name>
        <dbReference type="ChEBI" id="CHEBI:58349"/>
    </ligand>
</feature>
<feature type="binding site" evidence="2">
    <location>
        <position position="182"/>
    </location>
    <ligand>
        <name>NADP(+)</name>
        <dbReference type="ChEBI" id="CHEBI:58349"/>
    </ligand>
</feature>
<feature type="binding site" evidence="2">
    <location>
        <position position="186"/>
    </location>
    <ligand>
        <name>NADP(+)</name>
        <dbReference type="ChEBI" id="CHEBI:58349"/>
    </ligand>
</feature>
<feature type="binding site" evidence="1">
    <location>
        <position position="221"/>
    </location>
    <ligand>
        <name>NADP(+)</name>
        <dbReference type="ChEBI" id="CHEBI:58349"/>
    </ligand>
</feature>
<proteinExistence type="evidence at protein level"/>
<protein>
    <recommendedName>
        <fullName evidence="6">Short chain dehydrogenase/reductase nsrO</fullName>
        <shortName evidence="6">SDR nsrO</shortName>
        <ecNumber evidence="8">1.1.1.-</ecNumber>
    </recommendedName>
    <alternativeName>
        <fullName evidence="6">Neosartorin biosynthesis cluster protein O</fullName>
    </alternativeName>
</protein>
<gene>
    <name evidence="6" type="primary">nsrO</name>
    <name type="ORF">P174DRAFT_421366</name>
</gene>
<dbReference type="EC" id="1.1.1.-" evidence="8"/>
<dbReference type="EMBL" id="MSZS01000005">
    <property type="protein sequence ID" value="PKX92295.1"/>
    <property type="molecule type" value="Genomic_DNA"/>
</dbReference>
<dbReference type="SMR" id="A0A2I1C3V7"/>
<dbReference type="STRING" id="1392255.A0A2I1C3V7"/>
<dbReference type="VEuPathDB" id="FungiDB:P174DRAFT_421366"/>
<dbReference type="OMA" id="QHFAWER"/>
<dbReference type="OrthoDB" id="1933717at2759"/>
<dbReference type="Proteomes" id="UP000234474">
    <property type="component" value="Unassembled WGS sequence"/>
</dbReference>
<dbReference type="GO" id="GO:0016491">
    <property type="term" value="F:oxidoreductase activity"/>
    <property type="evidence" value="ECO:0007669"/>
    <property type="project" value="UniProtKB-KW"/>
</dbReference>
<dbReference type="GO" id="GO:0044550">
    <property type="term" value="P:secondary metabolite biosynthetic process"/>
    <property type="evidence" value="ECO:0007669"/>
    <property type="project" value="UniProtKB-ARBA"/>
</dbReference>
<dbReference type="CDD" id="cd05233">
    <property type="entry name" value="SDR_c"/>
    <property type="match status" value="1"/>
</dbReference>
<dbReference type="Gene3D" id="3.40.50.720">
    <property type="entry name" value="NAD(P)-binding Rossmann-like Domain"/>
    <property type="match status" value="1"/>
</dbReference>
<dbReference type="InterPro" id="IPR036291">
    <property type="entry name" value="NAD(P)-bd_dom_sf"/>
</dbReference>
<dbReference type="InterPro" id="IPR020904">
    <property type="entry name" value="Sc_DH/Rdtase_CS"/>
</dbReference>
<dbReference type="InterPro" id="IPR002347">
    <property type="entry name" value="SDR_fam"/>
</dbReference>
<dbReference type="PANTHER" id="PTHR42901">
    <property type="entry name" value="ALCOHOL DEHYDROGENASE"/>
    <property type="match status" value="1"/>
</dbReference>
<dbReference type="PANTHER" id="PTHR42901:SF1">
    <property type="entry name" value="ALCOHOL DEHYDROGENASE"/>
    <property type="match status" value="1"/>
</dbReference>
<dbReference type="Pfam" id="PF00106">
    <property type="entry name" value="adh_short"/>
    <property type="match status" value="1"/>
</dbReference>
<dbReference type="PRINTS" id="PR00081">
    <property type="entry name" value="GDHRDH"/>
</dbReference>
<dbReference type="SUPFAM" id="SSF51735">
    <property type="entry name" value="NAD(P)-binding Rossmann-fold domains"/>
    <property type="match status" value="1"/>
</dbReference>
<dbReference type="PROSITE" id="PS00061">
    <property type="entry name" value="ADH_SHORT"/>
    <property type="match status" value="1"/>
</dbReference>
<sequence>MSLFEAQPRPTKIYHSETYDRIAKHHGFNGQGKVVLITGGASGVGFSIAKAFAAAGVVCIAIVSRSASPQEQAKAALEAAYPSVRVVLFQASVTDSVRMPEILHELGPVDVLVLGVAVVHRREKATAITEQELRDAFDTNVIAAFNLTKAYLETPLPASGQKTIINISSAAAQVHTTRRVGYGSSKAAAAQVLQHFAVEQEQEPDGNPVRIFSFHPGAFYTPAVAQHFTKDEHKWDDLALPGDFAVWLAGPESSFLHGRHLWANWDVDELIGLRERVLQDRRFLTIGLVV</sequence>
<accession>A0A2I1C3V7</accession>
<reference key="1">
    <citation type="journal article" date="2018" name="Proc. Natl. Acad. Sci. U.S.A.">
        <title>Linking secondary metabolites to gene clusters through genome sequencing of six diverse Aspergillus species.</title>
        <authorList>
            <person name="Kjaerboelling I."/>
            <person name="Vesth T.C."/>
            <person name="Frisvad J.C."/>
            <person name="Nybo J.L."/>
            <person name="Theobald S."/>
            <person name="Kuo A."/>
            <person name="Bowyer P."/>
            <person name="Matsuda Y."/>
            <person name="Mondo S."/>
            <person name="Lyhne E.K."/>
            <person name="Kogle M.E."/>
            <person name="Clum A."/>
            <person name="Lipzen A."/>
            <person name="Salamov A."/>
            <person name="Ngan C.Y."/>
            <person name="Daum C."/>
            <person name="Chiniquy J."/>
            <person name="Barry K."/>
            <person name="LaButti K."/>
            <person name="Haridas S."/>
            <person name="Simmons B.A."/>
            <person name="Magnuson J.K."/>
            <person name="Mortensen U.H."/>
            <person name="Larsen T.O."/>
            <person name="Grigoriev I.V."/>
            <person name="Baker S.E."/>
            <person name="Andersen M.R."/>
        </authorList>
    </citation>
    <scope>NUCLEOTIDE SEQUENCE [LARGE SCALE GENOMIC DNA]</scope>
    <source>
        <strain>IBT 16806</strain>
    </source>
</reference>
<reference key="2">
    <citation type="journal article" date="2018" name="Org. Lett.">
        <title>Genetic characterization of neosartorin biosynthesis provides insight into heterodimeric natural product generation.</title>
        <authorList>
            <person name="Matsuda Y."/>
            <person name="Gotfredsen C.H."/>
            <person name="Larsen T.O."/>
        </authorList>
    </citation>
    <scope>FUNCTION</scope>
    <scope>DISRUPTION PHENOTYPE</scope>
    <scope>PATHWAY</scope>
</reference>
<reference key="3">
    <citation type="journal article" date="2020" name="Org. Lett.">
        <title>Unraveling the fungal strategy for tetrahydroxanthone biosynthesis and diversification.</title>
        <authorList>
            <person name="Wei X."/>
            <person name="Matsuda Y."/>
        </authorList>
    </citation>
    <scope>FUNCTION</scope>
    <scope>CATALYTIC ACTIVITY</scope>
    <scope>PATHWAY</scope>
</reference>
<reference key="4">
    <citation type="journal article" date="2021" name="J. Nat. Prod.">
        <title>Heterologous biosynthesis of tetrahydroxanthone dimers: determination of key factors for selective or divergent synthesis.</title>
        <authorList>
            <person name="Wei X."/>
            <person name="Chen X."/>
            <person name="Chen L."/>
            <person name="Yan D."/>
            <person name="Wang W.G."/>
            <person name="Matsuda Y."/>
        </authorList>
    </citation>
    <scope>FUNCTION</scope>
</reference>
<keyword id="KW-0521">NADP</keyword>
<keyword id="KW-0560">Oxidoreductase</keyword>
<keyword id="KW-1185">Reference proteome</keyword>
<organism>
    <name type="scientific">Aspergillus novofumigatus (strain IBT 16806)</name>
    <dbReference type="NCBI Taxonomy" id="1392255"/>
    <lineage>
        <taxon>Eukaryota</taxon>
        <taxon>Fungi</taxon>
        <taxon>Dikarya</taxon>
        <taxon>Ascomycota</taxon>
        <taxon>Pezizomycotina</taxon>
        <taxon>Eurotiomycetes</taxon>
        <taxon>Eurotiomycetidae</taxon>
        <taxon>Eurotiales</taxon>
        <taxon>Aspergillaceae</taxon>
        <taxon>Aspergillus</taxon>
        <taxon>Aspergillus subgen. Fumigati</taxon>
    </lineage>
</organism>
<evidence type="ECO:0000250" key="1">
    <source>
        <dbReference type="UniProtKB" id="L0E2Z4"/>
    </source>
</evidence>
<evidence type="ECO:0000250" key="2">
    <source>
        <dbReference type="UniProtKB" id="O93868"/>
    </source>
</evidence>
<evidence type="ECO:0000269" key="3">
    <source>
    </source>
</evidence>
<evidence type="ECO:0000269" key="4">
    <source>
    </source>
</evidence>
<evidence type="ECO:0000269" key="5">
    <source>
    </source>
</evidence>
<evidence type="ECO:0000303" key="6">
    <source>
    </source>
</evidence>
<evidence type="ECO:0000305" key="7"/>
<evidence type="ECO:0000305" key="8">
    <source>
    </source>
</evidence>